<gene>
    <name evidence="1" type="primary">murI</name>
    <name type="ordered locus">NTHI2050</name>
</gene>
<comment type="function">
    <text evidence="1">Provides the (R)-glutamate required for cell wall biosynthesis.</text>
</comment>
<comment type="catalytic activity">
    <reaction evidence="1">
        <text>L-glutamate = D-glutamate</text>
        <dbReference type="Rhea" id="RHEA:12813"/>
        <dbReference type="ChEBI" id="CHEBI:29985"/>
        <dbReference type="ChEBI" id="CHEBI:29986"/>
        <dbReference type="EC" id="5.1.1.3"/>
    </reaction>
</comment>
<comment type="pathway">
    <text evidence="1">Cell wall biogenesis; peptidoglycan biosynthesis.</text>
</comment>
<comment type="similarity">
    <text evidence="1">Belongs to the aspartate/glutamate racemases family.</text>
</comment>
<evidence type="ECO:0000255" key="1">
    <source>
        <dbReference type="HAMAP-Rule" id="MF_00258"/>
    </source>
</evidence>
<keyword id="KW-0133">Cell shape</keyword>
<keyword id="KW-0961">Cell wall biogenesis/degradation</keyword>
<keyword id="KW-0413">Isomerase</keyword>
<keyword id="KW-0573">Peptidoglycan synthesis</keyword>
<proteinExistence type="inferred from homology"/>
<protein>
    <recommendedName>
        <fullName evidence="1">Glutamate racemase</fullName>
        <ecNumber evidence="1">5.1.1.3</ecNumber>
    </recommendedName>
</protein>
<feature type="chain" id="PRO_1000047568" description="Glutamate racemase">
    <location>
        <begin position="1"/>
        <end position="269"/>
    </location>
</feature>
<feature type="active site" description="Proton donor/acceptor" evidence="1">
    <location>
        <position position="78"/>
    </location>
</feature>
<feature type="active site" description="Proton donor/acceptor" evidence="1">
    <location>
        <position position="189"/>
    </location>
</feature>
<feature type="binding site" evidence="1">
    <location>
        <begin position="14"/>
        <end position="15"/>
    </location>
    <ligand>
        <name>substrate</name>
    </ligand>
</feature>
<feature type="binding site" evidence="1">
    <location>
        <begin position="46"/>
        <end position="47"/>
    </location>
    <ligand>
        <name>substrate</name>
    </ligand>
</feature>
<feature type="binding site" evidence="1">
    <location>
        <begin position="79"/>
        <end position="80"/>
    </location>
    <ligand>
        <name>substrate</name>
    </ligand>
</feature>
<feature type="binding site" evidence="1">
    <location>
        <begin position="190"/>
        <end position="191"/>
    </location>
    <ligand>
        <name>substrate</name>
    </ligand>
</feature>
<reference key="1">
    <citation type="journal article" date="2005" name="J. Bacteriol.">
        <title>Genomic sequence of an otitis media isolate of nontypeable Haemophilus influenzae: comparative study with H. influenzae serotype d, strain KW20.</title>
        <authorList>
            <person name="Harrison A."/>
            <person name="Dyer D.W."/>
            <person name="Gillaspy A."/>
            <person name="Ray W.C."/>
            <person name="Mungur R."/>
            <person name="Carson M.B."/>
            <person name="Zhong H."/>
            <person name="Gipson J."/>
            <person name="Gipson M."/>
            <person name="Johnson L.S."/>
            <person name="Lewis L."/>
            <person name="Bakaletz L.O."/>
            <person name="Munson R.S. Jr."/>
        </authorList>
    </citation>
    <scope>NUCLEOTIDE SEQUENCE [LARGE SCALE GENOMIC DNA]</scope>
    <source>
        <strain>86-028NP</strain>
    </source>
</reference>
<dbReference type="EC" id="5.1.1.3" evidence="1"/>
<dbReference type="EMBL" id="CP000057">
    <property type="protein sequence ID" value="AAX88790.1"/>
    <property type="molecule type" value="Genomic_DNA"/>
</dbReference>
<dbReference type="RefSeq" id="WP_011272773.1">
    <property type="nucleotide sequence ID" value="NC_007146.2"/>
</dbReference>
<dbReference type="SMR" id="Q4QJK7"/>
<dbReference type="KEGG" id="hit:NTHI2050"/>
<dbReference type="HOGENOM" id="CLU_052344_2_0_6"/>
<dbReference type="UniPathway" id="UPA00219"/>
<dbReference type="Proteomes" id="UP000002525">
    <property type="component" value="Chromosome"/>
</dbReference>
<dbReference type="GO" id="GO:0008881">
    <property type="term" value="F:glutamate racemase activity"/>
    <property type="evidence" value="ECO:0007669"/>
    <property type="project" value="UniProtKB-UniRule"/>
</dbReference>
<dbReference type="GO" id="GO:0071555">
    <property type="term" value="P:cell wall organization"/>
    <property type="evidence" value="ECO:0007669"/>
    <property type="project" value="UniProtKB-KW"/>
</dbReference>
<dbReference type="GO" id="GO:0009252">
    <property type="term" value="P:peptidoglycan biosynthetic process"/>
    <property type="evidence" value="ECO:0007669"/>
    <property type="project" value="UniProtKB-UniRule"/>
</dbReference>
<dbReference type="GO" id="GO:0008360">
    <property type="term" value="P:regulation of cell shape"/>
    <property type="evidence" value="ECO:0007669"/>
    <property type="project" value="UniProtKB-KW"/>
</dbReference>
<dbReference type="FunFam" id="3.40.50.1860:FF:000001">
    <property type="entry name" value="Glutamate racemase"/>
    <property type="match status" value="1"/>
</dbReference>
<dbReference type="Gene3D" id="3.40.50.1860">
    <property type="match status" value="2"/>
</dbReference>
<dbReference type="HAMAP" id="MF_00258">
    <property type="entry name" value="Glu_racemase"/>
    <property type="match status" value="1"/>
</dbReference>
<dbReference type="InterPro" id="IPR015942">
    <property type="entry name" value="Asp/Glu/hydantoin_racemase"/>
</dbReference>
<dbReference type="InterPro" id="IPR001920">
    <property type="entry name" value="Asp/Glu_race"/>
</dbReference>
<dbReference type="InterPro" id="IPR018187">
    <property type="entry name" value="Asp/Glu_racemase_AS_1"/>
</dbReference>
<dbReference type="InterPro" id="IPR033134">
    <property type="entry name" value="Asp/Glu_racemase_AS_2"/>
</dbReference>
<dbReference type="InterPro" id="IPR004391">
    <property type="entry name" value="Glu_race"/>
</dbReference>
<dbReference type="NCBIfam" id="TIGR00067">
    <property type="entry name" value="glut_race"/>
    <property type="match status" value="1"/>
</dbReference>
<dbReference type="PANTHER" id="PTHR21198">
    <property type="entry name" value="GLUTAMATE RACEMASE"/>
    <property type="match status" value="1"/>
</dbReference>
<dbReference type="PANTHER" id="PTHR21198:SF2">
    <property type="entry name" value="GLUTAMATE RACEMASE"/>
    <property type="match status" value="1"/>
</dbReference>
<dbReference type="Pfam" id="PF01177">
    <property type="entry name" value="Asp_Glu_race"/>
    <property type="match status" value="1"/>
</dbReference>
<dbReference type="SUPFAM" id="SSF53681">
    <property type="entry name" value="Aspartate/glutamate racemase"/>
    <property type="match status" value="2"/>
</dbReference>
<dbReference type="PROSITE" id="PS00923">
    <property type="entry name" value="ASP_GLU_RACEMASE_1"/>
    <property type="match status" value="1"/>
</dbReference>
<dbReference type="PROSITE" id="PS00924">
    <property type="entry name" value="ASP_GLU_RACEMASE_2"/>
    <property type="match status" value="1"/>
</dbReference>
<name>MURI_HAEI8</name>
<sequence>MDKKEKRPTVLFFDSGVGGFSVYREAKKLLPNWHYLYCFDNAGFPYSEREEESIIHRTLAACQLINQRYPLDAIVIACNTASTVVLPPLRAAFEIPIIGTVPAIKPASEITKTKHIGLLATKGTVKRHYIDELIDKFAQDCIVERLGTTKLVEIAEQKIRGHSVDLISLKDELSSWAGMADLDTLVLGCTHFPLIKDEIQLCLPQVKYFMDPSAAIAKRIKYLLDDKNLQVQNEKYNQMFCTAHFPEESQFKKALHLWGFESLEVIKID</sequence>
<organism>
    <name type="scientific">Haemophilus influenzae (strain 86-028NP)</name>
    <dbReference type="NCBI Taxonomy" id="281310"/>
    <lineage>
        <taxon>Bacteria</taxon>
        <taxon>Pseudomonadati</taxon>
        <taxon>Pseudomonadota</taxon>
        <taxon>Gammaproteobacteria</taxon>
        <taxon>Pasteurellales</taxon>
        <taxon>Pasteurellaceae</taxon>
        <taxon>Haemophilus</taxon>
    </lineage>
</organism>
<accession>Q4QJK7</accession>